<dbReference type="EC" id="4.1.3.17"/>
<dbReference type="EC" id="4.1.1.112"/>
<dbReference type="EMBL" id="AM408590">
    <property type="protein sequence ID" value="CAL73906.1"/>
    <property type="molecule type" value="Genomic_DNA"/>
</dbReference>
<dbReference type="SMR" id="A1KQI8"/>
<dbReference type="KEGG" id="mbb:BCG_3916"/>
<dbReference type="HOGENOM" id="CLU_072626_4_0_11"/>
<dbReference type="Proteomes" id="UP000001472">
    <property type="component" value="Chromosome"/>
</dbReference>
<dbReference type="GO" id="GO:0047443">
    <property type="term" value="F:4-hydroxy-4-methyl-2-oxoglutarate aldolase activity"/>
    <property type="evidence" value="ECO:0007669"/>
    <property type="project" value="UniProtKB-EC"/>
</dbReference>
<dbReference type="GO" id="GO:0046872">
    <property type="term" value="F:metal ion binding"/>
    <property type="evidence" value="ECO:0007669"/>
    <property type="project" value="UniProtKB-KW"/>
</dbReference>
<dbReference type="GO" id="GO:0008948">
    <property type="term" value="F:oxaloacetate decarboxylase activity"/>
    <property type="evidence" value="ECO:0007669"/>
    <property type="project" value="UniProtKB-EC"/>
</dbReference>
<dbReference type="GO" id="GO:0008428">
    <property type="term" value="F:ribonuclease inhibitor activity"/>
    <property type="evidence" value="ECO:0007669"/>
    <property type="project" value="InterPro"/>
</dbReference>
<dbReference type="GO" id="GO:0051252">
    <property type="term" value="P:regulation of RNA metabolic process"/>
    <property type="evidence" value="ECO:0007669"/>
    <property type="project" value="InterPro"/>
</dbReference>
<dbReference type="CDD" id="cd16841">
    <property type="entry name" value="RraA_family"/>
    <property type="match status" value="1"/>
</dbReference>
<dbReference type="Gene3D" id="3.50.30.40">
    <property type="entry name" value="Ribonuclease E inhibitor RraA/RraA-like"/>
    <property type="match status" value="1"/>
</dbReference>
<dbReference type="InterPro" id="IPR010203">
    <property type="entry name" value="RraA"/>
</dbReference>
<dbReference type="InterPro" id="IPR005493">
    <property type="entry name" value="RraA/RraA-like"/>
</dbReference>
<dbReference type="InterPro" id="IPR036704">
    <property type="entry name" value="RraA/RraA-like_sf"/>
</dbReference>
<dbReference type="NCBIfam" id="TIGR01935">
    <property type="entry name" value="NOT-MenG"/>
    <property type="match status" value="1"/>
</dbReference>
<dbReference type="NCBIfam" id="NF006875">
    <property type="entry name" value="PRK09372.1"/>
    <property type="match status" value="1"/>
</dbReference>
<dbReference type="PANTHER" id="PTHR33254">
    <property type="entry name" value="4-HYDROXY-4-METHYL-2-OXOGLUTARATE ALDOLASE 3-RELATED"/>
    <property type="match status" value="1"/>
</dbReference>
<dbReference type="PANTHER" id="PTHR33254:SF4">
    <property type="entry name" value="4-HYDROXY-4-METHYL-2-OXOGLUTARATE ALDOLASE 3-RELATED"/>
    <property type="match status" value="1"/>
</dbReference>
<dbReference type="Pfam" id="PF03737">
    <property type="entry name" value="RraA-like"/>
    <property type="match status" value="1"/>
</dbReference>
<dbReference type="SUPFAM" id="SSF89562">
    <property type="entry name" value="RraA-like"/>
    <property type="match status" value="1"/>
</dbReference>
<gene>
    <name type="ordered locus">BCG_3916</name>
</gene>
<feature type="chain" id="PRO_1000013848" description="Putative 4-hydroxy-4-methyl-2-oxoglutarate aldolase">
    <location>
        <begin position="1"/>
        <end position="157"/>
    </location>
</feature>
<feature type="binding site" evidence="1">
    <location>
        <begin position="78"/>
        <end position="81"/>
    </location>
    <ligand>
        <name>substrate</name>
    </ligand>
</feature>
<feature type="binding site" evidence="1">
    <location>
        <position position="100"/>
    </location>
    <ligand>
        <name>substrate</name>
    </ligand>
</feature>
<feature type="binding site" evidence="1">
    <location>
        <position position="101"/>
    </location>
    <ligand>
        <name>a divalent metal cation</name>
        <dbReference type="ChEBI" id="CHEBI:60240"/>
    </ligand>
</feature>
<name>RRAAH_MYCBP</name>
<comment type="function">
    <text evidence="1">Catalyzes the aldol cleavage of 4-hydroxy-4-methyl-2-oxoglutarate (HMG) into 2 molecules of pyruvate. Also contains a secondary oxaloacetate (OAA) decarboxylase activity due to the common pyruvate enolate transition state formed following C-C bond cleavage in the retro-aldol and decarboxylation reactions (By similarity).</text>
</comment>
<comment type="catalytic activity">
    <reaction>
        <text>4-hydroxy-4-methyl-2-oxoglutarate = 2 pyruvate</text>
        <dbReference type="Rhea" id="RHEA:22748"/>
        <dbReference type="ChEBI" id="CHEBI:15361"/>
        <dbReference type="ChEBI" id="CHEBI:58276"/>
        <dbReference type="EC" id="4.1.3.17"/>
    </reaction>
</comment>
<comment type="catalytic activity">
    <reaction>
        <text>oxaloacetate + H(+) = pyruvate + CO2</text>
        <dbReference type="Rhea" id="RHEA:15641"/>
        <dbReference type="ChEBI" id="CHEBI:15361"/>
        <dbReference type="ChEBI" id="CHEBI:15378"/>
        <dbReference type="ChEBI" id="CHEBI:16452"/>
        <dbReference type="ChEBI" id="CHEBI:16526"/>
        <dbReference type="EC" id="4.1.1.112"/>
    </reaction>
</comment>
<comment type="cofactor">
    <cofactor evidence="1">
        <name>a divalent metal cation</name>
        <dbReference type="ChEBI" id="CHEBI:60240"/>
    </cofactor>
    <text evidence="1">Divalent metal cation.</text>
</comment>
<comment type="subunit">
    <text evidence="1">Homotrimer.</text>
</comment>
<comment type="similarity">
    <text evidence="2">Belongs to the class II aldolase/RraA-like family.</text>
</comment>
<organism>
    <name type="scientific">Mycobacterium bovis (strain BCG / Pasteur 1173P2)</name>
    <dbReference type="NCBI Taxonomy" id="410289"/>
    <lineage>
        <taxon>Bacteria</taxon>
        <taxon>Bacillati</taxon>
        <taxon>Actinomycetota</taxon>
        <taxon>Actinomycetes</taxon>
        <taxon>Mycobacteriales</taxon>
        <taxon>Mycobacteriaceae</taxon>
        <taxon>Mycobacterium</taxon>
        <taxon>Mycobacterium tuberculosis complex</taxon>
    </lineage>
</organism>
<keyword id="KW-0456">Lyase</keyword>
<keyword id="KW-0479">Metal-binding</keyword>
<proteinExistence type="inferred from homology"/>
<reference key="1">
    <citation type="journal article" date="2007" name="Proc. Natl. Acad. Sci. U.S.A.">
        <title>Genome plasticity of BCG and impact on vaccine efficacy.</title>
        <authorList>
            <person name="Brosch R."/>
            <person name="Gordon S.V."/>
            <person name="Garnier T."/>
            <person name="Eiglmeier K."/>
            <person name="Frigui W."/>
            <person name="Valenti P."/>
            <person name="Dos Santos S."/>
            <person name="Duthoy S."/>
            <person name="Lacroix C."/>
            <person name="Garcia-Pelayo C."/>
            <person name="Inwald J.K."/>
            <person name="Golby P."/>
            <person name="Garcia J.N."/>
            <person name="Hewinson R.G."/>
            <person name="Behr M.A."/>
            <person name="Quail M.A."/>
            <person name="Churcher C."/>
            <person name="Barrell B.G."/>
            <person name="Parkhill J."/>
            <person name="Cole S.T."/>
        </authorList>
    </citation>
    <scope>NUCLEOTIDE SEQUENCE [LARGE SCALE GENOMIC DNA]</scope>
    <source>
        <strain>BCG / Pasteur 1173P2</strain>
    </source>
</reference>
<sequence>MAISFRPTADLVDDIGPDVRSCDLQFRQFGGRSQFAGPISTVRCFQDNALLKSVLSQPSAGGVLVIDGAGSLHTALVGDVIAELARSTGWTGLIVHGAVRDAAALRGIDIGIKALGTNPRKSTKTGAGERDVEITLGGVTFVPGDIAYSDDDGIIVV</sequence>
<evidence type="ECO:0000250" key="1"/>
<evidence type="ECO:0000305" key="2"/>
<protein>
    <recommendedName>
        <fullName>Putative 4-hydroxy-4-methyl-2-oxoglutarate aldolase</fullName>
        <shortName>HMG aldolase</shortName>
        <ecNumber>4.1.3.17</ecNumber>
    </recommendedName>
    <alternativeName>
        <fullName>Oxaloacetate decarboxylase</fullName>
        <shortName>OAA decarboxylase</shortName>
        <ecNumber>4.1.1.112</ecNumber>
    </alternativeName>
    <alternativeName>
        <fullName>Regulator of ribonuclease activity homolog</fullName>
    </alternativeName>
    <alternativeName>
        <fullName>RraA-like protein</fullName>
    </alternativeName>
</protein>
<accession>A1KQI8</accession>